<comment type="function">
    <text evidence="1">DNA-dependent RNA polymerase catalyzes the transcription of DNA into RNA using the four ribonucleoside triphosphates as substrates.</text>
</comment>
<comment type="catalytic activity">
    <reaction evidence="1">
        <text>RNA(n) + a ribonucleoside 5'-triphosphate = RNA(n+1) + diphosphate</text>
        <dbReference type="Rhea" id="RHEA:21248"/>
        <dbReference type="Rhea" id="RHEA-COMP:14527"/>
        <dbReference type="Rhea" id="RHEA-COMP:17342"/>
        <dbReference type="ChEBI" id="CHEBI:33019"/>
        <dbReference type="ChEBI" id="CHEBI:61557"/>
        <dbReference type="ChEBI" id="CHEBI:140395"/>
        <dbReference type="EC" id="2.7.7.6"/>
    </reaction>
</comment>
<comment type="subunit">
    <text evidence="1">In plastids the minimal PEP RNA polymerase catalytic core is composed of four subunits: alpha, beta, beta', and beta''. When a (nuclear-encoded) sigma factor is associated with the core the holoenzyme is formed, which can initiate transcription.</text>
</comment>
<comment type="subcellular location">
    <subcellularLocation>
        <location>Plastid</location>
        <location>Chloroplast</location>
    </subcellularLocation>
</comment>
<comment type="similarity">
    <text evidence="1">Belongs to the RNA polymerase beta chain family.</text>
</comment>
<reference key="1">
    <citation type="journal article" date="2008" name="J. Mol. Evol.">
        <title>Complete sequence of the Duckweed (Lemna minor) chloroplast genome: structural organization and phylogenetic relationships to other angiosperms.</title>
        <authorList>
            <person name="Mardanov A.V."/>
            <person name="Ravin N.V."/>
            <person name="Kuznetsov B.B."/>
            <person name="Samigullin T.H."/>
            <person name="Antonov A.S."/>
            <person name="Kolganova T.V."/>
            <person name="Skyabin K.G."/>
        </authorList>
    </citation>
    <scope>NUCLEOTIDE SEQUENCE [LARGE SCALE GENOMIC DNA]</scope>
</reference>
<proteinExistence type="inferred from homology"/>
<dbReference type="EC" id="2.7.7.6" evidence="1"/>
<dbReference type="EMBL" id="DQ400350">
    <property type="protein sequence ID" value="ABD48487.1"/>
    <property type="molecule type" value="Genomic_DNA"/>
</dbReference>
<dbReference type="RefSeq" id="YP_001595500.1">
    <property type="nucleotide sequence ID" value="NC_010109.1"/>
</dbReference>
<dbReference type="SMR" id="A9L988"/>
<dbReference type="GeneID" id="5787576"/>
<dbReference type="GO" id="GO:0009507">
    <property type="term" value="C:chloroplast"/>
    <property type="evidence" value="ECO:0007669"/>
    <property type="project" value="UniProtKB-SubCell"/>
</dbReference>
<dbReference type="GO" id="GO:0000428">
    <property type="term" value="C:DNA-directed RNA polymerase complex"/>
    <property type="evidence" value="ECO:0007669"/>
    <property type="project" value="UniProtKB-KW"/>
</dbReference>
<dbReference type="GO" id="GO:0005739">
    <property type="term" value="C:mitochondrion"/>
    <property type="evidence" value="ECO:0007669"/>
    <property type="project" value="GOC"/>
</dbReference>
<dbReference type="GO" id="GO:0003677">
    <property type="term" value="F:DNA binding"/>
    <property type="evidence" value="ECO:0007669"/>
    <property type="project" value="UniProtKB-UniRule"/>
</dbReference>
<dbReference type="GO" id="GO:0003899">
    <property type="term" value="F:DNA-directed RNA polymerase activity"/>
    <property type="evidence" value="ECO:0007669"/>
    <property type="project" value="UniProtKB-UniRule"/>
</dbReference>
<dbReference type="GO" id="GO:0032549">
    <property type="term" value="F:ribonucleoside binding"/>
    <property type="evidence" value="ECO:0007669"/>
    <property type="project" value="InterPro"/>
</dbReference>
<dbReference type="GO" id="GO:0006351">
    <property type="term" value="P:DNA-templated transcription"/>
    <property type="evidence" value="ECO:0007669"/>
    <property type="project" value="UniProtKB-UniRule"/>
</dbReference>
<dbReference type="CDD" id="cd00653">
    <property type="entry name" value="RNA_pol_B_RPB2"/>
    <property type="match status" value="1"/>
</dbReference>
<dbReference type="FunFam" id="3.90.1110.10:FF:000009">
    <property type="entry name" value="DNA-directed RNA polymerase subunit beta"/>
    <property type="match status" value="1"/>
</dbReference>
<dbReference type="Gene3D" id="2.40.50.100">
    <property type="match status" value="1"/>
</dbReference>
<dbReference type="Gene3D" id="2.40.50.150">
    <property type="match status" value="1"/>
</dbReference>
<dbReference type="Gene3D" id="3.90.1100.10">
    <property type="match status" value="1"/>
</dbReference>
<dbReference type="Gene3D" id="2.30.150.10">
    <property type="entry name" value="DNA-directed RNA polymerase, beta subunit, external 1 domain"/>
    <property type="match status" value="1"/>
</dbReference>
<dbReference type="Gene3D" id="2.40.270.10">
    <property type="entry name" value="DNA-directed RNA polymerase, subunit 2, domain 6"/>
    <property type="match status" value="1"/>
</dbReference>
<dbReference type="Gene3D" id="3.90.1800.10">
    <property type="entry name" value="RNA polymerase alpha subunit dimerisation domain"/>
    <property type="match status" value="1"/>
</dbReference>
<dbReference type="Gene3D" id="3.90.1110.10">
    <property type="entry name" value="RNA polymerase Rpb2, domain 2"/>
    <property type="match status" value="1"/>
</dbReference>
<dbReference type="HAMAP" id="MF_01321">
    <property type="entry name" value="RNApol_bact_RpoB"/>
    <property type="match status" value="1"/>
</dbReference>
<dbReference type="InterPro" id="IPR042107">
    <property type="entry name" value="DNA-dir_RNA_pol_bsu_ext_1_sf"/>
</dbReference>
<dbReference type="InterPro" id="IPR015712">
    <property type="entry name" value="DNA-dir_RNA_pol_su2"/>
</dbReference>
<dbReference type="InterPro" id="IPR007120">
    <property type="entry name" value="DNA-dir_RNAP_su2_dom"/>
</dbReference>
<dbReference type="InterPro" id="IPR037033">
    <property type="entry name" value="DNA-dir_RNAP_su2_hyb_sf"/>
</dbReference>
<dbReference type="InterPro" id="IPR010243">
    <property type="entry name" value="RNA_pol_bsu_bac"/>
</dbReference>
<dbReference type="InterPro" id="IPR007121">
    <property type="entry name" value="RNA_pol_bsu_CS"/>
</dbReference>
<dbReference type="InterPro" id="IPR007644">
    <property type="entry name" value="RNA_pol_bsu_protrusion"/>
</dbReference>
<dbReference type="InterPro" id="IPR007642">
    <property type="entry name" value="RNA_pol_Rpb2_2"/>
</dbReference>
<dbReference type="InterPro" id="IPR037034">
    <property type="entry name" value="RNA_pol_Rpb2_2_sf"/>
</dbReference>
<dbReference type="InterPro" id="IPR007645">
    <property type="entry name" value="RNA_pol_Rpb2_3"/>
</dbReference>
<dbReference type="InterPro" id="IPR007641">
    <property type="entry name" value="RNA_pol_Rpb2_7"/>
</dbReference>
<dbReference type="InterPro" id="IPR014724">
    <property type="entry name" value="RNA_pol_RPB2_OB-fold"/>
</dbReference>
<dbReference type="NCBIfam" id="NF001616">
    <property type="entry name" value="PRK00405.1"/>
    <property type="match status" value="1"/>
</dbReference>
<dbReference type="PANTHER" id="PTHR20856">
    <property type="entry name" value="DNA-DIRECTED RNA POLYMERASE I SUBUNIT 2"/>
    <property type="match status" value="1"/>
</dbReference>
<dbReference type="Pfam" id="PF04563">
    <property type="entry name" value="RNA_pol_Rpb2_1"/>
    <property type="match status" value="1"/>
</dbReference>
<dbReference type="Pfam" id="PF04561">
    <property type="entry name" value="RNA_pol_Rpb2_2"/>
    <property type="match status" value="1"/>
</dbReference>
<dbReference type="Pfam" id="PF04565">
    <property type="entry name" value="RNA_pol_Rpb2_3"/>
    <property type="match status" value="1"/>
</dbReference>
<dbReference type="Pfam" id="PF00562">
    <property type="entry name" value="RNA_pol_Rpb2_6"/>
    <property type="match status" value="1"/>
</dbReference>
<dbReference type="Pfam" id="PF04560">
    <property type="entry name" value="RNA_pol_Rpb2_7"/>
    <property type="match status" value="1"/>
</dbReference>
<dbReference type="SUPFAM" id="SSF64484">
    <property type="entry name" value="beta and beta-prime subunits of DNA dependent RNA-polymerase"/>
    <property type="match status" value="1"/>
</dbReference>
<dbReference type="PROSITE" id="PS01166">
    <property type="entry name" value="RNA_POL_BETA"/>
    <property type="match status" value="1"/>
</dbReference>
<keyword id="KW-0150">Chloroplast</keyword>
<keyword id="KW-0240">DNA-directed RNA polymerase</keyword>
<keyword id="KW-0548">Nucleotidyltransferase</keyword>
<keyword id="KW-0934">Plastid</keyword>
<keyword id="KW-0804">Transcription</keyword>
<keyword id="KW-0808">Transferase</keyword>
<accession>A9L988</accession>
<name>RPOB_LEMMI</name>
<feature type="chain" id="PRO_0000329201" description="DNA-directed RNA polymerase subunit beta">
    <location>
        <begin position="1"/>
        <end position="1072"/>
    </location>
</feature>
<sequence length="1072" mass="121219">MLRDGNEGMFTIPGFSQIQFEGFCRFINQGLMEEFNKFPKIEDTDQEIEFKLFVETYQLAEPLIKERDAVYESLTYSSELYVLAGLIWKTNRDMKEQTVFIGNIPLMNSLGTFIVNGIYRIVINQILQSPGIYYRSELDHNGISVYTSTIISDWGGRSELEIDRKARIWARVSRKQKISILVLLSAMGLNLREILDNVCYPEIFLSFLNDKEKKKIGSKENAILEFYQQFACVGGDPVFSESLCKELQKKFFQQRCELGRIGRRNINQRLNLDIPHNNTFLLPRDVLAAADHLIGMKFGMGTLDDMNHLKNKRIRSVADLLQDQFGLALVRLENAVRGTISGAIRHKLIPTPQNLVTSTSLTTTYESFFGLHPLSQVLDRTNPLTQIVHGRKLSYLGPGGVTGRTASFRIRDIHPSHYGRICPIDTSEGINVGLIGSLAIHVRIGHWGSIETPFYEISERSKEKEARMIYLSPSRDEYYMIAAGNSLALNRGIQEEQVVPARYRQEFLTIAWEQVHLRSIFPFQYFSIGASLIPFIEHNDANRALMSSNMQRQAVPLSRSEKCIVGTGLERQAALDSGVSVIAEHEGKVISTDTHQIVFSGNGNTLNIPLVMYQRSNKNTCMHQKPQVQRGKYVKKGQILADGAATVGGELALGKNVLVAYMPWEGYNFEDAVLISERLVYSDIYTSFHIRKYEIQTHMTSQGPERITNEIPHLEAHLLRNLDRNGIVMLGSWVETGDILVGKLTPQIANESSYAPEDRLLRAILGIQVSTAKETSLKLPIGGRGRVIDVRWIQKKGGSSYNPEIIRVYILQKREIKVGDKVAGRHGNKGIISKILPRQDMPYLQDGTPVDMVFNPLGVPSRMNVGQIFECSLGLAGDLLNRHYRIAPFDERYEQEASRKLVFSELYEASKQTKNPWVFEPEYPGKSKIFDGRTGDPFEQAVLIGKSYILKLIHQVDDKIHGRSSGHYALVTQQPLRGRAKQGGQRVGEMEVWALEGFGVAHILQEMLTYKSDHIRARQEVLGTTIIGGTIVNPEDAPESFRLLVRELRSLALELNHFLVSEKNFQINRKEA</sequence>
<geneLocation type="chloroplast"/>
<organism>
    <name type="scientific">Lemna minor</name>
    <name type="common">Common duckweed</name>
    <dbReference type="NCBI Taxonomy" id="4472"/>
    <lineage>
        <taxon>Eukaryota</taxon>
        <taxon>Viridiplantae</taxon>
        <taxon>Streptophyta</taxon>
        <taxon>Embryophyta</taxon>
        <taxon>Tracheophyta</taxon>
        <taxon>Spermatophyta</taxon>
        <taxon>Magnoliopsida</taxon>
        <taxon>Liliopsida</taxon>
        <taxon>Araceae</taxon>
        <taxon>Lemnoideae</taxon>
        <taxon>Lemna</taxon>
    </lineage>
</organism>
<protein>
    <recommendedName>
        <fullName evidence="1">DNA-directed RNA polymerase subunit beta</fullName>
        <ecNumber evidence="1">2.7.7.6</ecNumber>
    </recommendedName>
    <alternativeName>
        <fullName evidence="1">PEP</fullName>
    </alternativeName>
    <alternativeName>
        <fullName evidence="1">Plastid-encoded RNA polymerase subunit beta</fullName>
        <shortName evidence="1">RNA polymerase subunit beta</shortName>
    </alternativeName>
</protein>
<evidence type="ECO:0000255" key="1">
    <source>
        <dbReference type="HAMAP-Rule" id="MF_01321"/>
    </source>
</evidence>
<gene>
    <name evidence="1" type="primary">rpoB</name>
</gene>